<evidence type="ECO:0000255" key="1">
    <source>
        <dbReference type="HAMAP-Rule" id="MF_01201"/>
    </source>
</evidence>
<gene>
    <name type="primary">alr</name>
    <name type="ordered locus">Aflv_0197</name>
</gene>
<organism>
    <name type="scientific">Anoxybacillus flavithermus (strain DSM 21510 / WK1)</name>
    <dbReference type="NCBI Taxonomy" id="491915"/>
    <lineage>
        <taxon>Bacteria</taxon>
        <taxon>Bacillati</taxon>
        <taxon>Bacillota</taxon>
        <taxon>Bacilli</taxon>
        <taxon>Bacillales</taxon>
        <taxon>Anoxybacillaceae</taxon>
        <taxon>Anoxybacillus</taxon>
    </lineage>
</organism>
<keyword id="KW-0413">Isomerase</keyword>
<keyword id="KW-0663">Pyridoxal phosphate</keyword>
<protein>
    <recommendedName>
        <fullName evidence="1">Alanine racemase</fullName>
        <ecNumber evidence="1">5.1.1.1</ecNumber>
    </recommendedName>
</protein>
<accession>B7GFP5</accession>
<dbReference type="EC" id="5.1.1.1" evidence="1"/>
<dbReference type="EMBL" id="CP000922">
    <property type="protein sequence ID" value="ACJ32581.1"/>
    <property type="molecule type" value="Genomic_DNA"/>
</dbReference>
<dbReference type="RefSeq" id="WP_012573926.1">
    <property type="nucleotide sequence ID" value="NC_011567.1"/>
</dbReference>
<dbReference type="SMR" id="B7GFP5"/>
<dbReference type="STRING" id="491915.Aflv_0197"/>
<dbReference type="GeneID" id="7036410"/>
<dbReference type="KEGG" id="afl:Aflv_0197"/>
<dbReference type="PATRIC" id="fig|491915.6.peg.200"/>
<dbReference type="eggNOG" id="COG0787">
    <property type="taxonomic scope" value="Bacteria"/>
</dbReference>
<dbReference type="HOGENOM" id="CLU_028393_2_1_9"/>
<dbReference type="UniPathway" id="UPA00042">
    <property type="reaction ID" value="UER00497"/>
</dbReference>
<dbReference type="Proteomes" id="UP000000742">
    <property type="component" value="Chromosome"/>
</dbReference>
<dbReference type="GO" id="GO:0005829">
    <property type="term" value="C:cytosol"/>
    <property type="evidence" value="ECO:0007669"/>
    <property type="project" value="TreeGrafter"/>
</dbReference>
<dbReference type="GO" id="GO:0008784">
    <property type="term" value="F:alanine racemase activity"/>
    <property type="evidence" value="ECO:0007669"/>
    <property type="project" value="UniProtKB-UniRule"/>
</dbReference>
<dbReference type="GO" id="GO:0030170">
    <property type="term" value="F:pyridoxal phosphate binding"/>
    <property type="evidence" value="ECO:0007669"/>
    <property type="project" value="UniProtKB-UniRule"/>
</dbReference>
<dbReference type="GO" id="GO:0030632">
    <property type="term" value="P:D-alanine biosynthetic process"/>
    <property type="evidence" value="ECO:0007669"/>
    <property type="project" value="UniProtKB-UniRule"/>
</dbReference>
<dbReference type="GO" id="GO:0009252">
    <property type="term" value="P:peptidoglycan biosynthetic process"/>
    <property type="evidence" value="ECO:0007669"/>
    <property type="project" value="TreeGrafter"/>
</dbReference>
<dbReference type="CDD" id="cd00430">
    <property type="entry name" value="PLPDE_III_AR"/>
    <property type="match status" value="1"/>
</dbReference>
<dbReference type="FunFam" id="2.40.37.10:FF:000006">
    <property type="entry name" value="Alanine racemase"/>
    <property type="match status" value="1"/>
</dbReference>
<dbReference type="FunFam" id="3.20.20.10:FF:000002">
    <property type="entry name" value="Alanine racemase"/>
    <property type="match status" value="1"/>
</dbReference>
<dbReference type="Gene3D" id="3.20.20.10">
    <property type="entry name" value="Alanine racemase"/>
    <property type="match status" value="1"/>
</dbReference>
<dbReference type="Gene3D" id="2.40.37.10">
    <property type="entry name" value="Lyase, Ornithine Decarboxylase, Chain A, domain 1"/>
    <property type="match status" value="1"/>
</dbReference>
<dbReference type="HAMAP" id="MF_01201">
    <property type="entry name" value="Ala_racemase"/>
    <property type="match status" value="1"/>
</dbReference>
<dbReference type="InterPro" id="IPR000821">
    <property type="entry name" value="Ala_racemase"/>
</dbReference>
<dbReference type="InterPro" id="IPR009006">
    <property type="entry name" value="Ala_racemase/Decarboxylase_C"/>
</dbReference>
<dbReference type="InterPro" id="IPR011079">
    <property type="entry name" value="Ala_racemase_C"/>
</dbReference>
<dbReference type="InterPro" id="IPR001608">
    <property type="entry name" value="Ala_racemase_N"/>
</dbReference>
<dbReference type="InterPro" id="IPR020622">
    <property type="entry name" value="Ala_racemase_pyridoxalP-BS"/>
</dbReference>
<dbReference type="InterPro" id="IPR029066">
    <property type="entry name" value="PLP-binding_barrel"/>
</dbReference>
<dbReference type="NCBIfam" id="TIGR00492">
    <property type="entry name" value="alr"/>
    <property type="match status" value="1"/>
</dbReference>
<dbReference type="PANTHER" id="PTHR30511">
    <property type="entry name" value="ALANINE RACEMASE"/>
    <property type="match status" value="1"/>
</dbReference>
<dbReference type="PANTHER" id="PTHR30511:SF0">
    <property type="entry name" value="ALANINE RACEMASE, CATABOLIC-RELATED"/>
    <property type="match status" value="1"/>
</dbReference>
<dbReference type="Pfam" id="PF00842">
    <property type="entry name" value="Ala_racemase_C"/>
    <property type="match status" value="1"/>
</dbReference>
<dbReference type="Pfam" id="PF01168">
    <property type="entry name" value="Ala_racemase_N"/>
    <property type="match status" value="1"/>
</dbReference>
<dbReference type="PRINTS" id="PR00992">
    <property type="entry name" value="ALARACEMASE"/>
</dbReference>
<dbReference type="SMART" id="SM01005">
    <property type="entry name" value="Ala_racemase_C"/>
    <property type="match status" value="1"/>
</dbReference>
<dbReference type="SUPFAM" id="SSF50621">
    <property type="entry name" value="Alanine racemase C-terminal domain-like"/>
    <property type="match status" value="1"/>
</dbReference>
<dbReference type="SUPFAM" id="SSF51419">
    <property type="entry name" value="PLP-binding barrel"/>
    <property type="match status" value="1"/>
</dbReference>
<dbReference type="PROSITE" id="PS00395">
    <property type="entry name" value="ALANINE_RACEMASE"/>
    <property type="match status" value="1"/>
</dbReference>
<reference key="1">
    <citation type="journal article" date="2008" name="Genome Biol.">
        <title>Encapsulated in silica: genome, proteome and physiology of the thermophilic bacterium Anoxybacillus flavithermus WK1.</title>
        <authorList>
            <person name="Saw J.H."/>
            <person name="Mountain B.W."/>
            <person name="Feng L."/>
            <person name="Omelchenko M.V."/>
            <person name="Hou S."/>
            <person name="Saito J.A."/>
            <person name="Stott M.B."/>
            <person name="Li D."/>
            <person name="Zhao G."/>
            <person name="Wu J."/>
            <person name="Galperin M.Y."/>
            <person name="Koonin E.V."/>
            <person name="Makarova K.S."/>
            <person name="Wolf Y.I."/>
            <person name="Rigden D.J."/>
            <person name="Dunfield P.F."/>
            <person name="Wang L."/>
            <person name="Alam M."/>
        </authorList>
    </citation>
    <scope>NUCLEOTIDE SEQUENCE [LARGE SCALE GENOMIC DNA]</scope>
    <source>
        <strain>DSM 21510 / WK1</strain>
    </source>
</reference>
<comment type="function">
    <text evidence="1">Catalyzes the interconversion of L-alanine and D-alanine. May also act on other amino acids.</text>
</comment>
<comment type="catalytic activity">
    <reaction evidence="1">
        <text>L-alanine = D-alanine</text>
        <dbReference type="Rhea" id="RHEA:20249"/>
        <dbReference type="ChEBI" id="CHEBI:57416"/>
        <dbReference type="ChEBI" id="CHEBI:57972"/>
        <dbReference type="EC" id="5.1.1.1"/>
    </reaction>
</comment>
<comment type="cofactor">
    <cofactor evidence="1">
        <name>pyridoxal 5'-phosphate</name>
        <dbReference type="ChEBI" id="CHEBI:597326"/>
    </cofactor>
</comment>
<comment type="pathway">
    <text evidence="1">Amino-acid biosynthesis; D-alanine biosynthesis; D-alanine from L-alanine: step 1/1.</text>
</comment>
<comment type="similarity">
    <text evidence="1">Belongs to the alanine racemase family.</text>
</comment>
<name>ALR_ANOFW</name>
<feature type="chain" id="PRO_1000138579" description="Alanine racemase">
    <location>
        <begin position="1"/>
        <end position="385"/>
    </location>
</feature>
<feature type="active site" description="Proton acceptor; specific for D-alanine" evidence="1">
    <location>
        <position position="40"/>
    </location>
</feature>
<feature type="active site" description="Proton acceptor; specific for L-alanine" evidence="1">
    <location>
        <position position="268"/>
    </location>
</feature>
<feature type="binding site" evidence="1">
    <location>
        <position position="139"/>
    </location>
    <ligand>
        <name>substrate</name>
    </ligand>
</feature>
<feature type="binding site" evidence="1">
    <location>
        <position position="315"/>
    </location>
    <ligand>
        <name>substrate</name>
    </ligand>
</feature>
<feature type="modified residue" description="N6-(pyridoxal phosphate)lysine" evidence="1">
    <location>
        <position position="40"/>
    </location>
</feature>
<sequence length="385" mass="43245">MEKAFYRDTWAEIDLDAIFYNVQSMKQHVGSHVEVIAVVKANAYGHGDIQVAKTALEAGATRLAVAFLDEALALRKKGISLDVPILVLGATKPQYAPLAASQNIALTVFRADWFEQAIVYAPYEQPLNVHMKLDTGMGRLGAKTKEEVQQMIYAIEQHPSFILEGVYTHFATADEQNIDYFSFQYDTFLHMLEWLSIQPPLIHCANSAAGLRYPDRIFNAVRFGISMYGLAPSQEMKSLLPYPLKEAFSLHSRLTHVKKVKGGEKISYGATYEAETDEWIGTVPIGYADGWLRRMQHFSVLVDGKRAPIVGRVCMDQMMIRLPYELPVGTKVTLIGEQQGDRISVDDVAAHVNTINYEIPCTISYRVPRIFLKNKSIIEVRNAVL</sequence>
<proteinExistence type="inferred from homology"/>